<comment type="function">
    <text>NHase catalyzes the hydration of various nitrile compounds to the corresponding amides.</text>
</comment>
<comment type="catalytic activity">
    <reaction>
        <text>an aliphatic primary amide = an aliphatic nitrile + H2O</text>
        <dbReference type="Rhea" id="RHEA:12673"/>
        <dbReference type="ChEBI" id="CHEBI:15377"/>
        <dbReference type="ChEBI" id="CHEBI:65285"/>
        <dbReference type="ChEBI" id="CHEBI:80291"/>
        <dbReference type="EC" id="4.2.1.84"/>
    </reaction>
</comment>
<comment type="cofactor">
    <cofactor>
        <name>Co(3+)</name>
        <dbReference type="ChEBI" id="CHEBI:49415"/>
    </cofactor>
    <text>Binds 1 Co(3+) ion per subunit.</text>
</comment>
<comment type="subunit">
    <text>Heterodimer of an alpha and a beta chain.</text>
</comment>
<comment type="induction">
    <text>By cobalt and urea or cyclohexanecarboxamide.</text>
</comment>
<comment type="biotechnology">
    <text>Industrial production of acrylamide is now being developed using some of these enzymes.</text>
</comment>
<comment type="similarity">
    <text evidence="4">Belongs to the nitrile hydratase subunit alpha family.</text>
</comment>
<protein>
    <recommendedName>
        <fullName>High-molecular weight cobalt-containing nitrile hydratase subunit alpha</fullName>
        <shortName>H-NHase</shortName>
        <shortName>H-nitrilase</shortName>
        <ecNumber>4.2.1.84</ecNumber>
    </recommendedName>
</protein>
<name>NHA1_RHORH</name>
<sequence length="203" mass="22835">MSEHVNKYTEYEARTKAIETLLYERGLITPAAVDRVVSYYENEIGPMGGAKVVAKSWVDPEYRKWLEEDATAAMASLGYAGEQAHQISAVFNDSQTHHVVVCTLCSCYPWPVLGLPPAWYKSMEYRSRVVADPRGVLKRDFGFDIPDEVEVRVWDSSSEIRYIVIPERPAGTDGWSEEELTKLVSRDSMIGVSNALTPQEVIV</sequence>
<dbReference type="EC" id="4.2.1.84"/>
<dbReference type="EMBL" id="X64359">
    <property type="protein sequence ID" value="CAA45710.1"/>
    <property type="molecule type" value="Genomic_DNA"/>
</dbReference>
<dbReference type="EMBL" id="D67027">
    <property type="protein sequence ID" value="BAA11044.1"/>
    <property type="molecule type" value="Genomic_DNA"/>
</dbReference>
<dbReference type="PIR" id="S19714">
    <property type="entry name" value="S19714"/>
</dbReference>
<dbReference type="SMR" id="P21219"/>
<dbReference type="BioCyc" id="MetaCyc:MONOMER-2283"/>
<dbReference type="BRENDA" id="4.2.1.84">
    <property type="organism ID" value="5395"/>
</dbReference>
<dbReference type="GO" id="GO:0018822">
    <property type="term" value="F:nitrile hydratase activity"/>
    <property type="evidence" value="ECO:0007669"/>
    <property type="project" value="UniProtKB-EC"/>
</dbReference>
<dbReference type="GO" id="GO:0046914">
    <property type="term" value="F:transition metal ion binding"/>
    <property type="evidence" value="ECO:0007669"/>
    <property type="project" value="InterPro"/>
</dbReference>
<dbReference type="Gene3D" id="3.90.330.10">
    <property type="entry name" value="Nitrile hydratase alpha /Thiocyanate hydrolase gamma"/>
    <property type="match status" value="1"/>
</dbReference>
<dbReference type="InterPro" id="IPR036648">
    <property type="entry name" value="CN_Hdrase_a/SCN_Hdrase_g_sf"/>
</dbReference>
<dbReference type="InterPro" id="IPR004232">
    <property type="entry name" value="CN_Hdrtase_a/SCN_Hdrlase_g"/>
</dbReference>
<dbReference type="InterPro" id="IPR023900">
    <property type="entry name" value="CN_Hdrtase_asu/SCN_Hdrlase_gsu"/>
</dbReference>
<dbReference type="InterPro" id="IPR018141">
    <property type="entry name" value="Nitrile_hydratase_asu"/>
</dbReference>
<dbReference type="NCBIfam" id="TIGR01323">
    <property type="entry name" value="nitrile_alph"/>
    <property type="match status" value="1"/>
</dbReference>
<dbReference type="Pfam" id="PF02979">
    <property type="entry name" value="NHase_alpha"/>
    <property type="match status" value="1"/>
</dbReference>
<dbReference type="PIRSF" id="PIRSF001426">
    <property type="entry name" value="NHase_alpha"/>
    <property type="match status" value="1"/>
</dbReference>
<dbReference type="SUPFAM" id="SSF56209">
    <property type="entry name" value="Nitrile hydratase alpha chain"/>
    <property type="match status" value="1"/>
</dbReference>
<organism>
    <name type="scientific">Rhodococcus rhodochrous</name>
    <dbReference type="NCBI Taxonomy" id="1829"/>
    <lineage>
        <taxon>Bacteria</taxon>
        <taxon>Bacillati</taxon>
        <taxon>Actinomycetota</taxon>
        <taxon>Actinomycetes</taxon>
        <taxon>Mycobacteriales</taxon>
        <taxon>Nocardiaceae</taxon>
        <taxon>Rhodococcus</taxon>
    </lineage>
</organism>
<proteinExistence type="evidence at protein level"/>
<gene>
    <name type="primary">nhhA</name>
</gene>
<keyword id="KW-0170">Cobalt</keyword>
<keyword id="KW-0903">Direct protein sequencing</keyword>
<keyword id="KW-0456">Lyase</keyword>
<keyword id="KW-0479">Metal-binding</keyword>
<reference key="1">
    <citation type="journal article" date="1991" name="Biochim. Biophys. Acta">
        <title>Cloning, nucleotide sequence and expression in Escherichia coli of two cobalt-containing nitrile hydratase genes from Rhodococcus rhodochrous J1.</title>
        <authorList>
            <person name="Kobayashi M."/>
            <person name="Nishiyama M."/>
            <person name="Nagasawa T."/>
            <person name="Horinouchi S."/>
            <person name="Beppu T."/>
            <person name="Yamada H."/>
        </authorList>
    </citation>
    <scope>NUCLEOTIDE SEQUENCE [GENOMIC DNA]</scope>
    <scope>PROTEIN SEQUENCE OF 2-27 AND 162-173</scope>
    <source>
        <strain>J1</strain>
    </source>
</reference>
<reference key="2">
    <citation type="journal article" date="1996" name="Proc. Natl. Acad. Sci. U.S.A.">
        <title>Characterization of the gene cluster of high-molecular-mass nitrile hydratase (H-NHase) induced by its reaction product in Rhodococcus rhodochrous J1.</title>
        <authorList>
            <person name="Komeda H."/>
            <person name="Kobayashi M."/>
            <person name="Shimizu S."/>
        </authorList>
    </citation>
    <scope>NUCLEOTIDE SEQUENCE [GENOMIC DNA]</scope>
    <source>
        <strain>J1</strain>
    </source>
</reference>
<reference key="3">
    <citation type="journal article" date="1991" name="Eur. J. Biochem.">
        <title>Characterization of a new cobalt-containing nitrile hydratase purified from urea-induced cells of Rhodococcus rhodochrous J1.</title>
        <authorList>
            <person name="Nagasawa T."/>
            <person name="Takeuchi K."/>
            <person name="Yamada H."/>
        </authorList>
    </citation>
    <scope>PROTEIN SEQUENCE OF 2-29</scope>
    <source>
        <strain>J1</strain>
    </source>
</reference>
<evidence type="ECO:0000250" key="1"/>
<evidence type="ECO:0000269" key="2">
    <source>
    </source>
</evidence>
<evidence type="ECO:0000269" key="3">
    <source>
    </source>
</evidence>
<evidence type="ECO:0000305" key="4"/>
<accession>P21219</accession>
<feature type="initiator methionine" description="Removed" evidence="2 3">
    <location>
        <position position="1"/>
    </location>
</feature>
<feature type="chain" id="PRO_0000186824" description="High-molecular weight cobalt-containing nitrile hydratase subunit alpha">
    <location>
        <begin position="2"/>
        <end position="203"/>
    </location>
</feature>
<feature type="binding site" evidence="1">
    <location>
        <position position="102"/>
    </location>
    <ligand>
        <name>Co(3+)</name>
        <dbReference type="ChEBI" id="CHEBI:49415"/>
    </ligand>
</feature>
<feature type="binding site" evidence="1">
    <location>
        <position position="105"/>
    </location>
    <ligand>
        <name>Co(3+)</name>
        <dbReference type="ChEBI" id="CHEBI:49415"/>
    </ligand>
</feature>
<feature type="binding site" evidence="1">
    <location>
        <position position="106"/>
    </location>
    <ligand>
        <name>Co(3+)</name>
        <dbReference type="ChEBI" id="CHEBI:49415"/>
    </ligand>
</feature>
<feature type="binding site" evidence="1">
    <location>
        <position position="107"/>
    </location>
    <ligand>
        <name>Co(3+)</name>
        <dbReference type="ChEBI" id="CHEBI:49415"/>
    </ligand>
</feature>